<name>FOXI3_MOUSE</name>
<gene>
    <name evidence="11 13" type="primary">Foxi3</name>
</gene>
<reference key="1">
    <citation type="journal article" date="2009" name="PLoS Biol.">
        <title>Lineage-specific biology revealed by a finished genome assembly of the mouse.</title>
        <authorList>
            <person name="Church D.M."/>
            <person name="Goodstadt L."/>
            <person name="Hillier L.W."/>
            <person name="Zody M.C."/>
            <person name="Goldstein S."/>
            <person name="She X."/>
            <person name="Bult C.J."/>
            <person name="Agarwala R."/>
            <person name="Cherry J.L."/>
            <person name="DiCuccio M."/>
            <person name="Hlavina W."/>
            <person name="Kapustin Y."/>
            <person name="Meric P."/>
            <person name="Maglott D."/>
            <person name="Birtle Z."/>
            <person name="Marques A.C."/>
            <person name="Graves T."/>
            <person name="Zhou S."/>
            <person name="Teague B."/>
            <person name="Potamousis K."/>
            <person name="Churas C."/>
            <person name="Place M."/>
            <person name="Herschleb J."/>
            <person name="Runnheim R."/>
            <person name="Forrest D."/>
            <person name="Amos-Landgraf J."/>
            <person name="Schwartz D.C."/>
            <person name="Cheng Z."/>
            <person name="Lindblad-Toh K."/>
            <person name="Eichler E.E."/>
            <person name="Ponting C.P."/>
        </authorList>
    </citation>
    <scope>NUCLEOTIDE SEQUENCE [LARGE SCALE GENOMIC DNA]</scope>
    <source>
        <strain>C57BL/6J</strain>
    </source>
</reference>
<reference key="2">
    <citation type="journal article" date="2013" name="Dev. Dyn.">
        <title>Expression of Foxi3 is regulated by ectodysplasin in skin appendage placodes.</title>
        <authorList>
            <person name="Shirokova V."/>
            <person name="Jussila M."/>
            <person name="Hytoenen M.K."/>
            <person name="Peraelae N."/>
            <person name="Droegemueller C."/>
            <person name="Leeb T."/>
            <person name="Lohi H."/>
            <person name="Sainio K."/>
            <person name="Thesleff I."/>
            <person name="Mikkola M.L."/>
        </authorList>
    </citation>
    <scope>TISSUE SPECIFICITY</scope>
    <scope>INDUCTION</scope>
</reference>
<reference key="3">
    <citation type="journal article" date="2014" name="Dev. Biol.">
        <title>Foxi transcription factors promote pharyngeal arch development by regulating formation of FGF signaling centers.</title>
        <authorList>
            <person name="Edlund R.K."/>
            <person name="Ohyama T."/>
            <person name="Kantarci H."/>
            <person name="Riley B.B."/>
            <person name="Groves A.K."/>
        </authorList>
    </citation>
    <scope>FUNCTION</scope>
    <scope>DISRUPTION PHENOTYPE</scope>
    <scope>TISSUE SPECIFICITY</scope>
</reference>
<reference key="4">
    <citation type="journal article" date="2015" name="Development">
        <title>Suppression of epithelial differentiation by Foxi3 is essential for molar crown patterning.</title>
        <authorList>
            <person name="Jussila M."/>
            <person name="Aalto A.J."/>
            <person name="Sanz Navarro M."/>
            <person name="Shirokova V."/>
            <person name="Balic A."/>
            <person name="Kallonen A."/>
            <person name="Ohyama T."/>
            <person name="Groves A.K."/>
            <person name="Mikkola M.L."/>
            <person name="Thesleff I."/>
        </authorList>
    </citation>
    <scope>FUNCTION</scope>
    <scope>DISRUPTION PHENOTYPE</scope>
</reference>
<reference key="5">
    <citation type="journal article" date="2016" name="Dev. Biol.">
        <title>The mouse Foxi3 transcription factor is necessary for the development of posterior placodes.</title>
        <authorList>
            <person name="Birol O."/>
            <person name="Ohyama T."/>
            <person name="Edlund R.K."/>
            <person name="Drakou K."/>
            <person name="Georgiades P."/>
            <person name="Groves A.K."/>
        </authorList>
    </citation>
    <scope>FUNCTION</scope>
    <scope>DISRUPTION PHENOTYPE</scope>
    <scope>TISSUE SPECIFICITY</scope>
</reference>
<reference key="6">
    <citation type="journal article" date="2016" name="Stem Cells">
        <title>Foxi3 deficiency compromises hair follicle stem cell specification and activation.</title>
        <authorList>
            <person name="Shirokova V."/>
            <person name="Biggs L.C."/>
            <person name="Jussila M."/>
            <person name="Ohyama T."/>
            <person name="Groves A.K."/>
            <person name="Mikkola M.L."/>
        </authorList>
    </citation>
    <scope>FUNCTION</scope>
    <scope>DISRUPTION PHENOTYPE</scope>
</reference>
<reference key="7">
    <citation type="journal article" date="2018" name="Sci. Rep.">
        <title>Foxi3 transcription factor activity is mediated by a C-terminal transactivation domain and regulated by the Protein Phosphatase 2A (PP2A) complex.</title>
        <authorList>
            <person name="Singh S."/>
            <person name="Jangid R.K."/>
            <person name="Crowder A."/>
            <person name="Groves A.K."/>
        </authorList>
    </citation>
    <scope>FUNCTION</scope>
    <scope>SUBCELLULAR LOCATION</scope>
    <scope>PHOSPHORYLATION AT SER-99; SER-103; SER-258; SER-266 AND SER-268</scope>
    <scope>MUTAGENESIS OF 99-SER--SER-103; 219-ARG--ARG-225; SER-258; 266-SER--SER-268; 385-SER--PRO-393 AND 386-MET--ILE-391</scope>
</reference>
<reference key="8">
    <citation type="journal article" date="2019" name="PLoS Genet.">
        <title>Tbx1 and Foxi3 genetically interact in the pharyngeal pouch endoderm in a mouse model for 22q11.2 deletion syndrome.</title>
        <authorList>
            <person name="Hasten E."/>
            <person name="Morrow B.E."/>
        </authorList>
    </citation>
    <scope>FUNCTION</scope>
    <scope>DISRUPTION PHENOTYPE</scope>
</reference>
<reference key="9">
    <citation type="journal article" date="2023" name="Nat. Commun.">
        <title>FOXI3 pathogenic variants cause one form of craniofacial microsomia.</title>
        <authorList>
            <person name="Mao K."/>
            <person name="Borel C."/>
            <person name="Ansar M."/>
            <person name="Jolly A."/>
            <person name="Makrythanasis P."/>
            <person name="Froehlich C."/>
            <person name="Iwaszkiewicz J."/>
            <person name="Wang B."/>
            <person name="Xu X."/>
            <person name="Li Q."/>
            <person name="Blanc X."/>
            <person name="Zhu H."/>
            <person name="Chen Q."/>
            <person name="Jin F."/>
            <person name="Ankamreddy H."/>
            <person name="Singh S."/>
            <person name="Zhang H."/>
            <person name="Wang X."/>
            <person name="Chen P."/>
            <person name="Ranza E."/>
            <person name="Paracha S.A."/>
            <person name="Shah S.F."/>
            <person name="Guida V."/>
            <person name="Piceci-Sparascio F."/>
            <person name="Melis D."/>
            <person name="Dallapiccola B."/>
            <person name="Digilio M.C."/>
            <person name="Novelli A."/>
            <person name="Magliozzi M."/>
            <person name="Fadda M.T."/>
            <person name="Streff H."/>
            <person name="Machol K."/>
            <person name="Lewis R.A."/>
            <person name="Zoete V."/>
            <person name="Squeo G.M."/>
            <person name="Prontera P."/>
            <person name="Mancano G."/>
            <person name="Gori G."/>
            <person name="Mariani M."/>
            <person name="Selicorni A."/>
            <person name="Psoni S."/>
            <person name="Fryssira H."/>
            <person name="Douzgou S."/>
            <person name="Marlin S."/>
            <person name="Biskup S."/>
            <person name="De Luca A."/>
            <person name="Merla G."/>
            <person name="Zhao S."/>
            <person name="Cox T.C."/>
            <person name="Groves A.K."/>
            <person name="Lupski J.R."/>
            <person name="Zhang Q."/>
            <person name="Zhang Y.B."/>
            <person name="Antonarakis S.E."/>
        </authorList>
    </citation>
    <scope>SUBCELLULAR LOCATION</scope>
    <scope>MUTAGENESIS OF 200-GLY--ARG-224; PHE-218 AND ARG-224</scope>
</reference>
<keyword id="KW-0217">Developmental protein</keyword>
<keyword id="KW-0238">DNA-binding</keyword>
<keyword id="KW-0539">Nucleus</keyword>
<keyword id="KW-0597">Phosphoprotein</keyword>
<keyword id="KW-1185">Reference proteome</keyword>
<keyword id="KW-0804">Transcription</keyword>
<keyword id="KW-0805">Transcription regulation</keyword>
<accession>D3Z120</accession>
<accession>E0CZH3</accession>
<feature type="chain" id="PRO_0000458754" description="Forkhead box protein I3">
    <location>
        <begin position="1"/>
        <end position="399"/>
    </location>
</feature>
<feature type="DNA-binding region" description="Fork-head" evidence="1">
    <location>
        <begin position="129"/>
        <end position="223"/>
    </location>
</feature>
<feature type="region of interest" description="Disordered" evidence="2">
    <location>
        <begin position="87"/>
        <end position="109"/>
    </location>
</feature>
<feature type="region of interest" description="Disordered" evidence="2">
    <location>
        <begin position="221"/>
        <end position="287"/>
    </location>
</feature>
<feature type="region of interest" description="Disordered" evidence="2">
    <location>
        <begin position="307"/>
        <end position="353"/>
    </location>
</feature>
<feature type="short sequence motif" description="Nuclear localization signal" evidence="8 10">
    <location>
        <begin position="219"/>
        <end position="225"/>
    </location>
</feature>
<feature type="short sequence motif" description="9aaTAD" evidence="8">
    <location>
        <begin position="385"/>
        <end position="393"/>
    </location>
</feature>
<feature type="compositionally biased region" description="Low complexity" evidence="2">
    <location>
        <begin position="96"/>
        <end position="109"/>
    </location>
</feature>
<feature type="compositionally biased region" description="Polar residues" evidence="2">
    <location>
        <begin position="228"/>
        <end position="248"/>
    </location>
</feature>
<feature type="compositionally biased region" description="Polar residues" evidence="2">
    <location>
        <begin position="258"/>
        <end position="267"/>
    </location>
</feature>
<feature type="compositionally biased region" description="Polar residues" evidence="2">
    <location>
        <begin position="275"/>
        <end position="287"/>
    </location>
</feature>
<feature type="compositionally biased region" description="Polar residues" evidence="2">
    <location>
        <begin position="307"/>
        <end position="317"/>
    </location>
</feature>
<feature type="compositionally biased region" description="Polar residues" evidence="2">
    <location>
        <begin position="328"/>
        <end position="353"/>
    </location>
</feature>
<feature type="modified residue" description="Phosphoserine" evidence="8">
    <location>
        <position position="99"/>
    </location>
</feature>
<feature type="modified residue" description="Phosphoserine" evidence="8">
    <location>
        <position position="103"/>
    </location>
</feature>
<feature type="modified residue" description="Phosphoserine" evidence="8">
    <location>
        <position position="258"/>
    </location>
</feature>
<feature type="modified residue" description="Phosphoserine" evidence="8">
    <location>
        <position position="266"/>
    </location>
</feature>
<feature type="modified residue" description="Phosphoserine" evidence="8">
    <location>
        <position position="268"/>
    </location>
</feature>
<feature type="mutagenesis site" description="Reduced transcription factor activity." evidence="8">
    <original>SAPAS</original>
    <variation>AAPAA</variation>
    <location>
        <begin position="99"/>
        <end position="103"/>
    </location>
</feature>
<feature type="mutagenesis site" description="Knockin mice are significantly smaller and die immediately after birth. They show a partially truncated mandible and fusion of the upper and lower jaws (syngnathia) and anomalies of various bones of the ear." evidence="10">
    <original>GNYWTLDPNCEKMFDNGNFRRKRRR</original>
    <variation>WRQH</variation>
    <location>
        <begin position="200"/>
        <end position="224"/>
    </location>
</feature>
<feature type="mutagenesis site" description="Knockin mice hemizygous for L-218 mutant and a deletion of the wild-type Foxi3 allele fail to thrive after birth, are underweight, display respiratory abnormalities and die between birth and day 5." evidence="10">
    <original>F</original>
    <variation>L</variation>
    <location>
        <position position="218"/>
    </location>
</feature>
<feature type="mutagenesis site" description="Abolished localization to the nucleus." evidence="8">
    <original>RRKRRRR</original>
    <variation>AAAAAAA</variation>
    <location>
        <begin position="219"/>
        <end position="225"/>
    </location>
</feature>
<feature type="mutagenesis site" description="Does not affect nuclear localization." evidence="10">
    <original>R</original>
    <variation>L</variation>
    <location>
        <position position="224"/>
    </location>
</feature>
<feature type="mutagenesis site" description="Does not affect transcription factor activity." evidence="8">
    <original>S</original>
    <variation>A</variation>
    <location>
        <position position="258"/>
    </location>
</feature>
<feature type="mutagenesis site" description="Does not affect transcription factor activity." evidence="8">
    <original>SQS</original>
    <variation>AQA</variation>
    <location>
        <begin position="266"/>
        <end position="268"/>
    </location>
</feature>
<feature type="mutagenesis site" description="In Mut2; strongly reduced transcription factor activity." evidence="8">
    <original>SMVNSLIYP</original>
    <variation>AAAAAAAAA</variation>
    <location>
        <begin position="385"/>
        <end position="393"/>
    </location>
</feature>
<feature type="mutagenesis site" description="In Mut1; reduced transcription factor activity." evidence="8">
    <original>MVNSLI</original>
    <variation>AANSAA</variation>
    <location>
        <begin position="386"/>
        <end position="391"/>
    </location>
</feature>
<protein>
    <recommendedName>
        <fullName evidence="12">Forkhead box protein I3</fullName>
    </recommendedName>
</protein>
<organism>
    <name type="scientific">Mus musculus</name>
    <name type="common">Mouse</name>
    <dbReference type="NCBI Taxonomy" id="10090"/>
    <lineage>
        <taxon>Eukaryota</taxon>
        <taxon>Metazoa</taxon>
        <taxon>Chordata</taxon>
        <taxon>Craniata</taxon>
        <taxon>Vertebrata</taxon>
        <taxon>Euteleostomi</taxon>
        <taxon>Mammalia</taxon>
        <taxon>Eutheria</taxon>
        <taxon>Euarchontoglires</taxon>
        <taxon>Glires</taxon>
        <taxon>Rodentia</taxon>
        <taxon>Myomorpha</taxon>
        <taxon>Muroidea</taxon>
        <taxon>Muridae</taxon>
        <taxon>Murinae</taxon>
        <taxon>Mus</taxon>
        <taxon>Mus</taxon>
    </lineage>
</organism>
<evidence type="ECO:0000255" key="1">
    <source>
        <dbReference type="PROSITE-ProRule" id="PRU00089"/>
    </source>
</evidence>
<evidence type="ECO:0000256" key="2">
    <source>
        <dbReference type="SAM" id="MobiDB-lite"/>
    </source>
</evidence>
<evidence type="ECO:0000269" key="3">
    <source>
    </source>
</evidence>
<evidence type="ECO:0000269" key="4">
    <source>
    </source>
</evidence>
<evidence type="ECO:0000269" key="5">
    <source>
    </source>
</evidence>
<evidence type="ECO:0000269" key="6">
    <source>
    </source>
</evidence>
<evidence type="ECO:0000269" key="7">
    <source>
    </source>
</evidence>
<evidence type="ECO:0000269" key="8">
    <source>
    </source>
</evidence>
<evidence type="ECO:0000269" key="9">
    <source>
    </source>
</evidence>
<evidence type="ECO:0000269" key="10">
    <source>
    </source>
</evidence>
<evidence type="ECO:0000303" key="11">
    <source>
    </source>
</evidence>
<evidence type="ECO:0000305" key="12"/>
<evidence type="ECO:0000312" key="13">
    <source>
        <dbReference type="MGI" id="MGI:3511278"/>
    </source>
</evidence>
<dbReference type="CCDS" id="CCDS51804.1"/>
<dbReference type="RefSeq" id="NP_001094934.1">
    <property type="nucleotide sequence ID" value="NM_001101464.1"/>
</dbReference>
<dbReference type="SMR" id="D3Z120"/>
<dbReference type="STRING" id="10090.ENSMUSP00000065664"/>
<dbReference type="iPTMnet" id="D3Z120"/>
<dbReference type="PhosphoSitePlus" id="D3Z120"/>
<dbReference type="PaxDb" id="10090-ENSMUSP00000125380"/>
<dbReference type="ABCD" id="D3Z120">
    <property type="antibodies" value="1 sequenced antibody"/>
</dbReference>
<dbReference type="Antibodypedia" id="73246">
    <property type="antibodies" value="125 antibodies from 23 providers"/>
</dbReference>
<dbReference type="DNASU" id="232077"/>
<dbReference type="Ensembl" id="ENSMUST00000069634.6">
    <property type="protein sequence ID" value="ENSMUSP00000065664.6"/>
    <property type="gene ID" value="ENSMUSG00000055874.7"/>
</dbReference>
<dbReference type="GeneID" id="232077"/>
<dbReference type="KEGG" id="mmu:232077"/>
<dbReference type="UCSC" id="uc012ene.1">
    <property type="organism name" value="mouse"/>
</dbReference>
<dbReference type="AGR" id="MGI:3511278"/>
<dbReference type="CTD" id="344167"/>
<dbReference type="MGI" id="MGI:3511278">
    <property type="gene designation" value="Foxi3"/>
</dbReference>
<dbReference type="VEuPathDB" id="HostDB:ENSMUSG00000055874"/>
<dbReference type="eggNOG" id="KOG2294">
    <property type="taxonomic scope" value="Eukaryota"/>
</dbReference>
<dbReference type="GeneTree" id="ENSGT00940000162575"/>
<dbReference type="HOGENOM" id="CLU_046860_0_0_1"/>
<dbReference type="InParanoid" id="E0CZH3"/>
<dbReference type="OrthoDB" id="5402974at2759"/>
<dbReference type="PhylomeDB" id="D3Z120"/>
<dbReference type="TreeFam" id="TF316127"/>
<dbReference type="BioGRID-ORCS" id="232077">
    <property type="hits" value="1 hit in 77 CRISPR screens"/>
</dbReference>
<dbReference type="PRO" id="PR:D3Z120"/>
<dbReference type="Proteomes" id="UP000000589">
    <property type="component" value="Chromosome 6"/>
</dbReference>
<dbReference type="Bgee" id="ENSMUSG00000055874">
    <property type="expression patterns" value="Expressed in pharyngeal pouch and 40 other cell types or tissues"/>
</dbReference>
<dbReference type="ExpressionAtlas" id="D3Z120">
    <property type="expression patterns" value="baseline and differential"/>
</dbReference>
<dbReference type="GO" id="GO:0005634">
    <property type="term" value="C:nucleus"/>
    <property type="evidence" value="ECO:0000314"/>
    <property type="project" value="UniProtKB"/>
</dbReference>
<dbReference type="GO" id="GO:0000981">
    <property type="term" value="F:DNA-binding transcription factor activity, RNA polymerase II-specific"/>
    <property type="evidence" value="ECO:0000314"/>
    <property type="project" value="UniProtKB"/>
</dbReference>
<dbReference type="GO" id="GO:0043565">
    <property type="term" value="F:sequence-specific DNA binding"/>
    <property type="evidence" value="ECO:0007669"/>
    <property type="project" value="InterPro"/>
</dbReference>
<dbReference type="GO" id="GO:0009957">
    <property type="term" value="P:epidermal cell fate specification"/>
    <property type="evidence" value="ECO:0000315"/>
    <property type="project" value="UniProtKB"/>
</dbReference>
<dbReference type="GO" id="GO:0001942">
    <property type="term" value="P:hair follicle development"/>
    <property type="evidence" value="ECO:0000315"/>
    <property type="project" value="UniProtKB"/>
</dbReference>
<dbReference type="GO" id="GO:0042475">
    <property type="term" value="P:odontogenesis of dentin-containing tooth"/>
    <property type="evidence" value="ECO:0000250"/>
    <property type="project" value="UniProtKB"/>
</dbReference>
<dbReference type="GO" id="GO:1905040">
    <property type="term" value="P:otic placode development"/>
    <property type="evidence" value="ECO:0000315"/>
    <property type="project" value="UniProtKB"/>
</dbReference>
<dbReference type="GO" id="GO:0060017">
    <property type="term" value="P:parathyroid gland development"/>
    <property type="evidence" value="ECO:0000315"/>
    <property type="project" value="UniProtKB"/>
</dbReference>
<dbReference type="GO" id="GO:0060037">
    <property type="term" value="P:pharyngeal system development"/>
    <property type="evidence" value="ECO:0000315"/>
    <property type="project" value="UniProtKB"/>
</dbReference>
<dbReference type="GO" id="GO:0048538">
    <property type="term" value="P:thymus development"/>
    <property type="evidence" value="ECO:0000315"/>
    <property type="project" value="UniProtKB"/>
</dbReference>
<dbReference type="FunFam" id="1.10.10.10:FF:000016">
    <property type="entry name" value="Forkhead box protein I1"/>
    <property type="match status" value="1"/>
</dbReference>
<dbReference type="Gene3D" id="1.10.10.10">
    <property type="entry name" value="Winged helix-like DNA-binding domain superfamily/Winged helix DNA-binding domain"/>
    <property type="match status" value="1"/>
</dbReference>
<dbReference type="InterPro" id="IPR001766">
    <property type="entry name" value="Fork_head_dom"/>
</dbReference>
<dbReference type="InterPro" id="IPR050211">
    <property type="entry name" value="FOX_domain-containing"/>
</dbReference>
<dbReference type="InterPro" id="IPR018122">
    <property type="entry name" value="TF_fork_head_CS_1"/>
</dbReference>
<dbReference type="InterPro" id="IPR030456">
    <property type="entry name" value="TF_fork_head_CS_2"/>
</dbReference>
<dbReference type="InterPro" id="IPR036388">
    <property type="entry name" value="WH-like_DNA-bd_sf"/>
</dbReference>
<dbReference type="InterPro" id="IPR036390">
    <property type="entry name" value="WH_DNA-bd_sf"/>
</dbReference>
<dbReference type="PANTHER" id="PTHR11829">
    <property type="entry name" value="FORKHEAD BOX PROTEIN"/>
    <property type="match status" value="1"/>
</dbReference>
<dbReference type="PANTHER" id="PTHR11829:SF310">
    <property type="entry name" value="FORKHEAD BOX PROTEIN I3"/>
    <property type="match status" value="1"/>
</dbReference>
<dbReference type="Pfam" id="PF00250">
    <property type="entry name" value="Forkhead"/>
    <property type="match status" value="1"/>
</dbReference>
<dbReference type="PRINTS" id="PR00053">
    <property type="entry name" value="FORKHEAD"/>
</dbReference>
<dbReference type="SMART" id="SM00339">
    <property type="entry name" value="FH"/>
    <property type="match status" value="1"/>
</dbReference>
<dbReference type="SUPFAM" id="SSF46785">
    <property type="entry name" value="Winged helix' DNA-binding domain"/>
    <property type="match status" value="1"/>
</dbReference>
<dbReference type="PROSITE" id="PS00657">
    <property type="entry name" value="FORK_HEAD_1"/>
    <property type="match status" value="1"/>
</dbReference>
<dbReference type="PROSITE" id="PS00658">
    <property type="entry name" value="FORK_HEAD_2"/>
    <property type="match status" value="1"/>
</dbReference>
<dbReference type="PROSITE" id="PS50039">
    <property type="entry name" value="FORK_HEAD_3"/>
    <property type="match status" value="1"/>
</dbReference>
<sequence>MALYCGDNFVYSQPAAAPGAPPTSRAPYGLSDYAAPPAAAANPYLWLNGPGVGGPASAASYLGAPPPPPGAAPGPFLQPPAAPGTFAGAQRGFAQPSASAPASPAGSAAPGELGWLSMASREDLMKMVRPPYSYSALIAMAIQSAPERKLTLSHIYQFVADNFPFYQRSKAGWQNSIRHNLSLNDCFKKVPRDEDDPGKGNYWTLDPNCEKMFDNGNFRRKRRRRAEASSNLTVPSGTSKSEGQSSRLRVSGKLEGDSPSSILRPSQSPEPPEGTKSTASSPGASTLTSTPCLNTFLSTFNTLNVNSSSSMGNQRTLPGSRRHLGGTQLPSSTFPNTSVPDSSPDSMQLSTVGGSNQLSSYYNPFSGGSSGDQSSPFSSPFYNFSMVNSLIYPRDGSDI</sequence>
<comment type="function">
    <text evidence="4 5 6 7 8 9">Transcription factor required for pharyngeal arch development, which is involved in hair, ear, jaw and dental development (PubMed:24650709, PubMed:26550799, PubMed:26992132, PubMed:30467319). May act as a pioneer transcription factor during pharyngeal arch development (PubMed:26550799, PubMed:26992132). Required for epithelial cell differentiation within the epidermis (PubMed:26450968). Acts at multiple stages of otic placode induction: necessary for preplacodal ectoderm to execute an inner ear program (PubMed:26550799). Required for hair follicle stem cell specification (PubMed:26992132). Acts downstream of TBX1 for the formation of the thymus and parathyroid glands from the third pharyngeal pouch (PubMed:31412026).</text>
</comment>
<comment type="subcellular location">
    <subcellularLocation>
        <location evidence="1 8 10">Nucleus</location>
    </subcellularLocation>
</comment>
<comment type="tissue specificity">
    <text evidence="3 4 6">Specifically expressed in the epithelium in developing ectodermal appendages (PubMed:23441037). Expressed in pharyngeal endoderm and ectoderm (PubMed:24650709). Expressed in pre-placodal ectoderm (PubMed:26550799). Down-regulated as the otic placode is induced (PubMed:26550799). Expressed in teeth and hair follicles throughout embryogenesis (PubMed:23441037). Expressed in mammary glands only during the earliest stages of development (PubMed:23441037).</text>
</comment>
<comment type="induction">
    <text evidence="3">Regulated by ectodysplasin (EDA) in skin appendage placodes.</text>
</comment>
<comment type="domain">
    <text evidence="8">The 9aaTAD motif is a transactivation domain present in a large number of yeast and animal transcription factors.</text>
</comment>
<comment type="PTM">
    <text evidence="8">Phosphorylation promotes the transcription factor activity (PubMed:30467319). Dephosphorylation by protein phosphatase 2A (PP2A) reduces its activity (PubMed:30467319).</text>
</comment>
<comment type="disruption phenotype">
    <text evidence="4 5 6 7 9">Embryonic lethality due to impaired pharyngeal arches segmentation (PubMed:24650709). Embryos fail to form endodermal pouches and this results in failed pharyngeal arches segmentation leading to severe defects in the skull, jaw, and ears (PubMed:24650709, PubMed:26550799). Craniofacial neural crest cells undergo apoptosis in the mutant embryos at 10.0 day post coitum (dpc) (PubMed:24650709). Conditional deletion in epithelium leads to fusion of molars with abnormally patterned shallow cusps (PubMed:26450968). Conditional deletion impairs postnatal hair growth and hair cycling, resulting in poor hair regeneration upon hair plucking; defects are caused by progressive depletion of hair follicle stem cells (PubMed:26992132). Conditional deletion also results in defects in the distal pharyngeal apparatus (PubMed:31412026).</text>
</comment>
<proteinExistence type="evidence at protein level"/>